<keyword id="KW-0067">ATP-binding</keyword>
<keyword id="KW-0997">Cell inner membrane</keyword>
<keyword id="KW-1003">Cell membrane</keyword>
<keyword id="KW-0472">Membrane</keyword>
<keyword id="KW-0547">Nucleotide-binding</keyword>
<keyword id="KW-0918">Phosphonate transport</keyword>
<keyword id="KW-1278">Translocase</keyword>
<keyword id="KW-0813">Transport</keyword>
<comment type="function">
    <text evidence="1">Part of the ABC transporter complex PhnCDE involved in phosphonates import. Responsible for energy coupling to the transport system.</text>
</comment>
<comment type="catalytic activity">
    <reaction evidence="1">
        <text>phosphonate(out) + ATP + H2O = phosphonate(in) + ADP + phosphate + H(+)</text>
        <dbReference type="Rhea" id="RHEA:18065"/>
        <dbReference type="ChEBI" id="CHEBI:15377"/>
        <dbReference type="ChEBI" id="CHEBI:15378"/>
        <dbReference type="ChEBI" id="CHEBI:16215"/>
        <dbReference type="ChEBI" id="CHEBI:30616"/>
        <dbReference type="ChEBI" id="CHEBI:43474"/>
        <dbReference type="ChEBI" id="CHEBI:456216"/>
        <dbReference type="EC" id="7.3.2.2"/>
    </reaction>
</comment>
<comment type="subunit">
    <text evidence="1">The complex is composed of two ATP-binding proteins (PhnC), two transmembrane proteins (PhnE) and a solute-binding protein (PhnD).</text>
</comment>
<comment type="subcellular location">
    <subcellularLocation>
        <location evidence="1">Cell inner membrane</location>
        <topology evidence="1">Peripheral membrane protein</topology>
    </subcellularLocation>
</comment>
<comment type="similarity">
    <text evidence="1">Belongs to the ABC transporter superfamily. Phosphonates importer (TC 3.A.1.9.1) family.</text>
</comment>
<gene>
    <name evidence="1" type="primary">phnC</name>
    <name type="ordered locus">UTI89_C4700</name>
</gene>
<organism>
    <name type="scientific">Escherichia coli (strain UTI89 / UPEC)</name>
    <dbReference type="NCBI Taxonomy" id="364106"/>
    <lineage>
        <taxon>Bacteria</taxon>
        <taxon>Pseudomonadati</taxon>
        <taxon>Pseudomonadota</taxon>
        <taxon>Gammaproteobacteria</taxon>
        <taxon>Enterobacterales</taxon>
        <taxon>Enterobacteriaceae</taxon>
        <taxon>Escherichia</taxon>
    </lineage>
</organism>
<protein>
    <recommendedName>
        <fullName evidence="1">Phosphonates import ATP-binding protein PhnC</fullName>
        <ecNumber evidence="1">7.3.2.2</ecNumber>
    </recommendedName>
</protein>
<accession>Q1R3F6</accession>
<reference key="1">
    <citation type="journal article" date="2006" name="Proc. Natl. Acad. Sci. U.S.A.">
        <title>Identification of genes subject to positive selection in uropathogenic strains of Escherichia coli: a comparative genomics approach.</title>
        <authorList>
            <person name="Chen S.L."/>
            <person name="Hung C.-S."/>
            <person name="Xu J."/>
            <person name="Reigstad C.S."/>
            <person name="Magrini V."/>
            <person name="Sabo A."/>
            <person name="Blasiar D."/>
            <person name="Bieri T."/>
            <person name="Meyer R.R."/>
            <person name="Ozersky P."/>
            <person name="Armstrong J.R."/>
            <person name="Fulton R.S."/>
            <person name="Latreille J.P."/>
            <person name="Spieth J."/>
            <person name="Hooton T.M."/>
            <person name="Mardis E.R."/>
            <person name="Hultgren S.J."/>
            <person name="Gordon J.I."/>
        </authorList>
    </citation>
    <scope>NUCLEOTIDE SEQUENCE [LARGE SCALE GENOMIC DNA]</scope>
    <source>
        <strain>UTI89 / UPEC</strain>
    </source>
</reference>
<name>PHNC_ECOUT</name>
<feature type="chain" id="PRO_0000274711" description="Phosphonates import ATP-binding protein PhnC">
    <location>
        <begin position="1"/>
        <end position="262"/>
    </location>
</feature>
<feature type="domain" description="ABC transporter" evidence="1">
    <location>
        <begin position="5"/>
        <end position="253"/>
    </location>
</feature>
<feature type="binding site" evidence="1">
    <location>
        <begin position="37"/>
        <end position="44"/>
    </location>
    <ligand>
        <name>ATP</name>
        <dbReference type="ChEBI" id="CHEBI:30616"/>
    </ligand>
</feature>
<sequence length="262" mass="29523">MQTIIRVEKLAKTFNQHQALHAVDLNIHHGEMVALLGPSGSGKSTLLRHLSGLITGDKSVGSHIELLGRTVQREGRLARDIRKSRAHTGYIFQQFNLVNRLSVLENVLIGALGSTPFWRTCFSYFTREQKQRALQALTRVGMVHFAHQRVSTLSGGQQQRVAIARALMQQAKVILADEPIASLDPESARIVMDTLRDINQNDGITVVVTLHQVDYALRYCERIVALRQGHVFYDGCSQQFDNERFDHLYRSINRVEENAKAA</sequence>
<dbReference type="EC" id="7.3.2.2" evidence="1"/>
<dbReference type="EMBL" id="CP000243">
    <property type="protein sequence ID" value="ABE10108.1"/>
    <property type="molecule type" value="Genomic_DNA"/>
</dbReference>
<dbReference type="RefSeq" id="WP_001193413.1">
    <property type="nucleotide sequence ID" value="NZ_CP064825.1"/>
</dbReference>
<dbReference type="SMR" id="Q1R3F6"/>
<dbReference type="KEGG" id="eci:UTI89_C4700"/>
<dbReference type="HOGENOM" id="CLU_000604_1_22_6"/>
<dbReference type="Proteomes" id="UP000001952">
    <property type="component" value="Chromosome"/>
</dbReference>
<dbReference type="GO" id="GO:0005886">
    <property type="term" value="C:plasma membrane"/>
    <property type="evidence" value="ECO:0007669"/>
    <property type="project" value="UniProtKB-SubCell"/>
</dbReference>
<dbReference type="GO" id="GO:0015416">
    <property type="term" value="F:ABC-type phosphonate transporter activity"/>
    <property type="evidence" value="ECO:0007669"/>
    <property type="project" value="UniProtKB-EC"/>
</dbReference>
<dbReference type="GO" id="GO:0005524">
    <property type="term" value="F:ATP binding"/>
    <property type="evidence" value="ECO:0007669"/>
    <property type="project" value="UniProtKB-KW"/>
</dbReference>
<dbReference type="GO" id="GO:0016887">
    <property type="term" value="F:ATP hydrolysis activity"/>
    <property type="evidence" value="ECO:0007669"/>
    <property type="project" value="InterPro"/>
</dbReference>
<dbReference type="CDD" id="cd03256">
    <property type="entry name" value="ABC_PhnC_transporter"/>
    <property type="match status" value="1"/>
</dbReference>
<dbReference type="Gene3D" id="3.40.50.300">
    <property type="entry name" value="P-loop containing nucleotide triphosphate hydrolases"/>
    <property type="match status" value="1"/>
</dbReference>
<dbReference type="InterPro" id="IPR003593">
    <property type="entry name" value="AAA+_ATPase"/>
</dbReference>
<dbReference type="InterPro" id="IPR003439">
    <property type="entry name" value="ABC_transporter-like_ATP-bd"/>
</dbReference>
<dbReference type="InterPro" id="IPR017871">
    <property type="entry name" value="ABC_transporter-like_CS"/>
</dbReference>
<dbReference type="InterPro" id="IPR012693">
    <property type="entry name" value="ABC_transpr_PhnC"/>
</dbReference>
<dbReference type="InterPro" id="IPR050086">
    <property type="entry name" value="MetN_ABC_transporter-like"/>
</dbReference>
<dbReference type="InterPro" id="IPR027417">
    <property type="entry name" value="P-loop_NTPase"/>
</dbReference>
<dbReference type="NCBIfam" id="TIGR02315">
    <property type="entry name" value="ABC_phnC"/>
    <property type="match status" value="1"/>
</dbReference>
<dbReference type="NCBIfam" id="NF007438">
    <property type="entry name" value="PRK09984.1"/>
    <property type="match status" value="1"/>
</dbReference>
<dbReference type="PANTHER" id="PTHR43166">
    <property type="entry name" value="AMINO ACID IMPORT ATP-BINDING PROTEIN"/>
    <property type="match status" value="1"/>
</dbReference>
<dbReference type="PANTHER" id="PTHR43166:SF6">
    <property type="entry name" value="PHOSPHONATES IMPORT ATP-BINDING PROTEIN PHNC"/>
    <property type="match status" value="1"/>
</dbReference>
<dbReference type="Pfam" id="PF00005">
    <property type="entry name" value="ABC_tran"/>
    <property type="match status" value="1"/>
</dbReference>
<dbReference type="SMART" id="SM00382">
    <property type="entry name" value="AAA"/>
    <property type="match status" value="1"/>
</dbReference>
<dbReference type="SUPFAM" id="SSF52540">
    <property type="entry name" value="P-loop containing nucleoside triphosphate hydrolases"/>
    <property type="match status" value="1"/>
</dbReference>
<dbReference type="PROSITE" id="PS00211">
    <property type="entry name" value="ABC_TRANSPORTER_1"/>
    <property type="match status" value="1"/>
</dbReference>
<dbReference type="PROSITE" id="PS50893">
    <property type="entry name" value="ABC_TRANSPORTER_2"/>
    <property type="match status" value="1"/>
</dbReference>
<dbReference type="PROSITE" id="PS51249">
    <property type="entry name" value="PHNC"/>
    <property type="match status" value="1"/>
</dbReference>
<evidence type="ECO:0000255" key="1">
    <source>
        <dbReference type="HAMAP-Rule" id="MF_01713"/>
    </source>
</evidence>
<proteinExistence type="inferred from homology"/>